<accession>A7FZ68</accession>
<name>RL4_CLOB1</name>
<feature type="chain" id="PRO_1000052382" description="Large ribosomal subunit protein uL4">
    <location>
        <begin position="1"/>
        <end position="206"/>
    </location>
</feature>
<feature type="region of interest" description="Disordered" evidence="2">
    <location>
        <begin position="47"/>
        <end position="75"/>
    </location>
</feature>
<gene>
    <name evidence="1" type="primary">rplD</name>
    <name type="ordered locus">CLB_3536</name>
</gene>
<protein>
    <recommendedName>
        <fullName evidence="1">Large ribosomal subunit protein uL4</fullName>
    </recommendedName>
    <alternativeName>
        <fullName evidence="3">50S ribosomal protein L4</fullName>
    </alternativeName>
</protein>
<sequence length="206" mass="22868">MPKVDLFNQNGEKVGDLQLADSVFGVEVNTYAMHQVVKALLANKRQGTQSAKTRAEVSGGGIKPWRQKGTGRARQGSIRAPQWIHGGVVFAPKPRDYRMSIPKSMKKVAIKSALTSKVNENLMVVVDEIKLETPKTKEVVKMLNSFNAKKTLIITNNAEENVYKSARNIEGVQIIPVNNINVYDVLKYDKVVITKDAVSKIEEVYA</sequence>
<keyword id="KW-0687">Ribonucleoprotein</keyword>
<keyword id="KW-0689">Ribosomal protein</keyword>
<keyword id="KW-0694">RNA-binding</keyword>
<keyword id="KW-0699">rRNA-binding</keyword>
<organism>
    <name type="scientific">Clostridium botulinum (strain ATCC 19397 / Type A)</name>
    <dbReference type="NCBI Taxonomy" id="441770"/>
    <lineage>
        <taxon>Bacteria</taxon>
        <taxon>Bacillati</taxon>
        <taxon>Bacillota</taxon>
        <taxon>Clostridia</taxon>
        <taxon>Eubacteriales</taxon>
        <taxon>Clostridiaceae</taxon>
        <taxon>Clostridium</taxon>
    </lineage>
</organism>
<proteinExistence type="inferred from homology"/>
<dbReference type="EMBL" id="CP000726">
    <property type="protein sequence ID" value="ABS35100.1"/>
    <property type="molecule type" value="Genomic_DNA"/>
</dbReference>
<dbReference type="RefSeq" id="WP_003357518.1">
    <property type="nucleotide sequence ID" value="NC_009697.1"/>
</dbReference>
<dbReference type="SMR" id="A7FZ68"/>
<dbReference type="GeneID" id="5187777"/>
<dbReference type="KEGG" id="cba:CLB_3536"/>
<dbReference type="HOGENOM" id="CLU_041575_5_2_9"/>
<dbReference type="GO" id="GO:1990904">
    <property type="term" value="C:ribonucleoprotein complex"/>
    <property type="evidence" value="ECO:0007669"/>
    <property type="project" value="UniProtKB-KW"/>
</dbReference>
<dbReference type="GO" id="GO:0005840">
    <property type="term" value="C:ribosome"/>
    <property type="evidence" value="ECO:0007669"/>
    <property type="project" value="UniProtKB-KW"/>
</dbReference>
<dbReference type="GO" id="GO:0019843">
    <property type="term" value="F:rRNA binding"/>
    <property type="evidence" value="ECO:0007669"/>
    <property type="project" value="UniProtKB-UniRule"/>
</dbReference>
<dbReference type="GO" id="GO:0003735">
    <property type="term" value="F:structural constituent of ribosome"/>
    <property type="evidence" value="ECO:0007669"/>
    <property type="project" value="InterPro"/>
</dbReference>
<dbReference type="GO" id="GO:0006412">
    <property type="term" value="P:translation"/>
    <property type="evidence" value="ECO:0007669"/>
    <property type="project" value="UniProtKB-UniRule"/>
</dbReference>
<dbReference type="FunFam" id="3.40.1370.10:FF:000003">
    <property type="entry name" value="50S ribosomal protein L4"/>
    <property type="match status" value="1"/>
</dbReference>
<dbReference type="Gene3D" id="3.40.1370.10">
    <property type="match status" value="1"/>
</dbReference>
<dbReference type="HAMAP" id="MF_01328_B">
    <property type="entry name" value="Ribosomal_uL4_B"/>
    <property type="match status" value="1"/>
</dbReference>
<dbReference type="InterPro" id="IPR002136">
    <property type="entry name" value="Ribosomal_uL4"/>
</dbReference>
<dbReference type="InterPro" id="IPR013005">
    <property type="entry name" value="Ribosomal_uL4-like"/>
</dbReference>
<dbReference type="InterPro" id="IPR023574">
    <property type="entry name" value="Ribosomal_uL4_dom_sf"/>
</dbReference>
<dbReference type="NCBIfam" id="TIGR03953">
    <property type="entry name" value="rplD_bact"/>
    <property type="match status" value="1"/>
</dbReference>
<dbReference type="PANTHER" id="PTHR10746">
    <property type="entry name" value="50S RIBOSOMAL PROTEIN L4"/>
    <property type="match status" value="1"/>
</dbReference>
<dbReference type="PANTHER" id="PTHR10746:SF6">
    <property type="entry name" value="LARGE RIBOSOMAL SUBUNIT PROTEIN UL4M"/>
    <property type="match status" value="1"/>
</dbReference>
<dbReference type="Pfam" id="PF00573">
    <property type="entry name" value="Ribosomal_L4"/>
    <property type="match status" value="1"/>
</dbReference>
<dbReference type="SUPFAM" id="SSF52166">
    <property type="entry name" value="Ribosomal protein L4"/>
    <property type="match status" value="1"/>
</dbReference>
<comment type="function">
    <text evidence="1">One of the primary rRNA binding proteins, this protein initially binds near the 5'-end of the 23S rRNA. It is important during the early stages of 50S assembly. It makes multiple contacts with different domains of the 23S rRNA in the assembled 50S subunit and ribosome.</text>
</comment>
<comment type="function">
    <text evidence="1">Forms part of the polypeptide exit tunnel.</text>
</comment>
<comment type="subunit">
    <text evidence="1">Part of the 50S ribosomal subunit.</text>
</comment>
<comment type="similarity">
    <text evidence="1">Belongs to the universal ribosomal protein uL4 family.</text>
</comment>
<evidence type="ECO:0000255" key="1">
    <source>
        <dbReference type="HAMAP-Rule" id="MF_01328"/>
    </source>
</evidence>
<evidence type="ECO:0000256" key="2">
    <source>
        <dbReference type="SAM" id="MobiDB-lite"/>
    </source>
</evidence>
<evidence type="ECO:0000305" key="3"/>
<reference key="1">
    <citation type="journal article" date="2007" name="PLoS ONE">
        <title>Analysis of the neurotoxin complex genes in Clostridium botulinum A1-A4 and B1 strains: BoNT/A3, /Ba4 and /B1 clusters are located within plasmids.</title>
        <authorList>
            <person name="Smith T.J."/>
            <person name="Hill K.K."/>
            <person name="Foley B.T."/>
            <person name="Detter J.C."/>
            <person name="Munk A.C."/>
            <person name="Bruce D.C."/>
            <person name="Doggett N.A."/>
            <person name="Smith L.A."/>
            <person name="Marks J.D."/>
            <person name="Xie G."/>
            <person name="Brettin T.S."/>
        </authorList>
    </citation>
    <scope>NUCLEOTIDE SEQUENCE [LARGE SCALE GENOMIC DNA]</scope>
    <source>
        <strain>ATCC 19397 / Type A</strain>
    </source>
</reference>